<comment type="function">
    <text evidence="1">Catalyzes the transfer of the phosphoribosyl group of 5-phosphorylribose-1-pyrophosphate (PRPP) to anthranilate to yield N-(5'-phosphoribosyl)-anthranilate (PRA).</text>
</comment>
<comment type="catalytic activity">
    <reaction evidence="1">
        <text>N-(5-phospho-beta-D-ribosyl)anthranilate + diphosphate = 5-phospho-alpha-D-ribose 1-diphosphate + anthranilate</text>
        <dbReference type="Rhea" id="RHEA:11768"/>
        <dbReference type="ChEBI" id="CHEBI:16567"/>
        <dbReference type="ChEBI" id="CHEBI:18277"/>
        <dbReference type="ChEBI" id="CHEBI:33019"/>
        <dbReference type="ChEBI" id="CHEBI:58017"/>
        <dbReference type="EC" id="2.4.2.18"/>
    </reaction>
</comment>
<comment type="cofactor">
    <cofactor evidence="1">
        <name>Mg(2+)</name>
        <dbReference type="ChEBI" id="CHEBI:18420"/>
    </cofactor>
    <text evidence="1">Binds 2 magnesium ions per monomer.</text>
</comment>
<comment type="pathway">
    <text evidence="1">Amino-acid biosynthesis; L-tryptophan biosynthesis; L-tryptophan from chorismate: step 2/5.</text>
</comment>
<comment type="subunit">
    <text evidence="1">Homodimer.</text>
</comment>
<comment type="similarity">
    <text evidence="1">Belongs to the anthranilate phosphoribosyltransferase family.</text>
</comment>
<protein>
    <recommendedName>
        <fullName evidence="1">Anthranilate phosphoribosyltransferase</fullName>
        <ecNumber evidence="1">2.4.2.18</ecNumber>
    </recommendedName>
</protein>
<reference key="1">
    <citation type="journal article" date="2005" name="Genome Res.">
        <title>Coping with cold: the genome of the versatile marine Antarctica bacterium Pseudoalteromonas haloplanktis TAC125.</title>
        <authorList>
            <person name="Medigue C."/>
            <person name="Krin E."/>
            <person name="Pascal G."/>
            <person name="Barbe V."/>
            <person name="Bernsel A."/>
            <person name="Bertin P.N."/>
            <person name="Cheung F."/>
            <person name="Cruveiller S."/>
            <person name="D'Amico S."/>
            <person name="Duilio A."/>
            <person name="Fang G."/>
            <person name="Feller G."/>
            <person name="Ho C."/>
            <person name="Mangenot S."/>
            <person name="Marino G."/>
            <person name="Nilsson J."/>
            <person name="Parrilli E."/>
            <person name="Rocha E.P.C."/>
            <person name="Rouy Z."/>
            <person name="Sekowska A."/>
            <person name="Tutino M.L."/>
            <person name="Vallenet D."/>
            <person name="von Heijne G."/>
            <person name="Danchin A."/>
        </authorList>
    </citation>
    <scope>NUCLEOTIDE SEQUENCE [LARGE SCALE GENOMIC DNA]</scope>
    <source>
        <strain>TAC 125</strain>
    </source>
</reference>
<organism>
    <name type="scientific">Pseudoalteromonas translucida (strain TAC 125)</name>
    <dbReference type="NCBI Taxonomy" id="326442"/>
    <lineage>
        <taxon>Bacteria</taxon>
        <taxon>Pseudomonadati</taxon>
        <taxon>Pseudomonadota</taxon>
        <taxon>Gammaproteobacteria</taxon>
        <taxon>Alteromonadales</taxon>
        <taxon>Pseudoalteromonadaceae</taxon>
        <taxon>Pseudoalteromonas</taxon>
    </lineage>
</organism>
<gene>
    <name evidence="1" type="primary">trpD</name>
    <name type="ordered locus">PSHAa1291</name>
</gene>
<name>TRPD_PSET1</name>
<evidence type="ECO:0000255" key="1">
    <source>
        <dbReference type="HAMAP-Rule" id="MF_00211"/>
    </source>
</evidence>
<keyword id="KW-0028">Amino-acid biosynthesis</keyword>
<keyword id="KW-0057">Aromatic amino acid biosynthesis</keyword>
<keyword id="KW-0328">Glycosyltransferase</keyword>
<keyword id="KW-0460">Magnesium</keyword>
<keyword id="KW-0479">Metal-binding</keyword>
<keyword id="KW-1185">Reference proteome</keyword>
<keyword id="KW-0808">Transferase</keyword>
<keyword id="KW-0822">Tryptophan biosynthesis</keyword>
<sequence>MSIQTKQNINVLSANMHNASIQTAIEQLISNQSLSYTQSKALFDEIMQGNMSDIELSALLIALKSKGEISDEIAGAAASMRENALAFNTTRNQLADCCGTGGDGSNTINISTTAAIVAAAAGINMVKHGNRSVSSNSGSADLLKALGINIEMTPAQAANCLEQTGFTFLFAPQYHPGVRHAMGVRTALKTRTIFNILGPLVNPAAPEVQLLGVYNPNLCLPMAQTLRTLGTKRAMIVHGSGTDEIALHGPTTVVELNNGNISEYTLNPSDFDLANYSLEQLTGEGPQYNANVSLAILQGKGDEAHNAAIIVNVAALLYLSGKAQSLKDGAHKVHTLLSSGQAMNTLNAIIEVSNG</sequence>
<feature type="chain" id="PRO_0000227182" description="Anthranilate phosphoribosyltransferase">
    <location>
        <begin position="1"/>
        <end position="355"/>
    </location>
</feature>
<feature type="binding site" evidence="1">
    <location>
        <position position="99"/>
    </location>
    <ligand>
        <name>5-phospho-alpha-D-ribose 1-diphosphate</name>
        <dbReference type="ChEBI" id="CHEBI:58017"/>
    </ligand>
</feature>
<feature type="binding site" evidence="1">
    <location>
        <position position="99"/>
    </location>
    <ligand>
        <name>anthranilate</name>
        <dbReference type="ChEBI" id="CHEBI:16567"/>
        <label>1</label>
    </ligand>
</feature>
<feature type="binding site" evidence="1">
    <location>
        <begin position="102"/>
        <end position="103"/>
    </location>
    <ligand>
        <name>5-phospho-alpha-D-ribose 1-diphosphate</name>
        <dbReference type="ChEBI" id="CHEBI:58017"/>
    </ligand>
</feature>
<feature type="binding site" evidence="1">
    <location>
        <position position="107"/>
    </location>
    <ligand>
        <name>5-phospho-alpha-D-ribose 1-diphosphate</name>
        <dbReference type="ChEBI" id="CHEBI:58017"/>
    </ligand>
</feature>
<feature type="binding site" evidence="1">
    <location>
        <begin position="109"/>
        <end position="112"/>
    </location>
    <ligand>
        <name>5-phospho-alpha-D-ribose 1-diphosphate</name>
        <dbReference type="ChEBI" id="CHEBI:58017"/>
    </ligand>
</feature>
<feature type="binding site" evidence="1">
    <location>
        <position position="111"/>
    </location>
    <ligand>
        <name>Mg(2+)</name>
        <dbReference type="ChEBI" id="CHEBI:18420"/>
        <label>1</label>
    </ligand>
</feature>
<feature type="binding site" evidence="1">
    <location>
        <begin position="127"/>
        <end position="135"/>
    </location>
    <ligand>
        <name>5-phospho-alpha-D-ribose 1-diphosphate</name>
        <dbReference type="ChEBI" id="CHEBI:58017"/>
    </ligand>
</feature>
<feature type="binding site" evidence="1">
    <location>
        <position position="130"/>
    </location>
    <ligand>
        <name>anthranilate</name>
        <dbReference type="ChEBI" id="CHEBI:16567"/>
        <label>1</label>
    </ligand>
</feature>
<feature type="binding site" evidence="1">
    <location>
        <position position="139"/>
    </location>
    <ligand>
        <name>5-phospho-alpha-D-ribose 1-diphosphate</name>
        <dbReference type="ChEBI" id="CHEBI:58017"/>
    </ligand>
</feature>
<feature type="binding site" evidence="1">
    <location>
        <position position="185"/>
    </location>
    <ligand>
        <name>anthranilate</name>
        <dbReference type="ChEBI" id="CHEBI:16567"/>
        <label>2</label>
    </ligand>
</feature>
<feature type="binding site" evidence="1">
    <location>
        <position position="243"/>
    </location>
    <ligand>
        <name>Mg(2+)</name>
        <dbReference type="ChEBI" id="CHEBI:18420"/>
        <label>2</label>
    </ligand>
</feature>
<feature type="binding site" evidence="1">
    <location>
        <position position="244"/>
    </location>
    <ligand>
        <name>Mg(2+)</name>
        <dbReference type="ChEBI" id="CHEBI:18420"/>
        <label>1</label>
    </ligand>
</feature>
<feature type="binding site" evidence="1">
    <location>
        <position position="244"/>
    </location>
    <ligand>
        <name>Mg(2+)</name>
        <dbReference type="ChEBI" id="CHEBI:18420"/>
        <label>2</label>
    </ligand>
</feature>
<dbReference type="EC" id="2.4.2.18" evidence="1"/>
<dbReference type="EMBL" id="CR954246">
    <property type="protein sequence ID" value="CAI86366.1"/>
    <property type="molecule type" value="Genomic_DNA"/>
</dbReference>
<dbReference type="SMR" id="Q3IKY4"/>
<dbReference type="STRING" id="326442.PSHAa1291"/>
<dbReference type="KEGG" id="pha:PSHAa1291"/>
<dbReference type="eggNOG" id="COG0547">
    <property type="taxonomic scope" value="Bacteria"/>
</dbReference>
<dbReference type="HOGENOM" id="CLU_034315_2_1_6"/>
<dbReference type="BioCyc" id="PHAL326442:PSHA_RS06365-MONOMER"/>
<dbReference type="UniPathway" id="UPA00035">
    <property type="reaction ID" value="UER00041"/>
</dbReference>
<dbReference type="Proteomes" id="UP000006843">
    <property type="component" value="Chromosome I"/>
</dbReference>
<dbReference type="GO" id="GO:0005829">
    <property type="term" value="C:cytosol"/>
    <property type="evidence" value="ECO:0007669"/>
    <property type="project" value="TreeGrafter"/>
</dbReference>
<dbReference type="GO" id="GO:0004048">
    <property type="term" value="F:anthranilate phosphoribosyltransferase activity"/>
    <property type="evidence" value="ECO:0007669"/>
    <property type="project" value="UniProtKB-UniRule"/>
</dbReference>
<dbReference type="GO" id="GO:0000287">
    <property type="term" value="F:magnesium ion binding"/>
    <property type="evidence" value="ECO:0007669"/>
    <property type="project" value="UniProtKB-UniRule"/>
</dbReference>
<dbReference type="GO" id="GO:0000162">
    <property type="term" value="P:L-tryptophan biosynthetic process"/>
    <property type="evidence" value="ECO:0007669"/>
    <property type="project" value="UniProtKB-UniRule"/>
</dbReference>
<dbReference type="FunFam" id="3.40.1030.10:FF:000002">
    <property type="entry name" value="Anthranilate phosphoribosyltransferase"/>
    <property type="match status" value="1"/>
</dbReference>
<dbReference type="Gene3D" id="3.40.1030.10">
    <property type="entry name" value="Nucleoside phosphorylase/phosphoribosyltransferase catalytic domain"/>
    <property type="match status" value="1"/>
</dbReference>
<dbReference type="Gene3D" id="1.20.970.10">
    <property type="entry name" value="Transferase, Pyrimidine Nucleoside Phosphorylase, Chain C"/>
    <property type="match status" value="1"/>
</dbReference>
<dbReference type="HAMAP" id="MF_00211">
    <property type="entry name" value="TrpD"/>
    <property type="match status" value="1"/>
</dbReference>
<dbReference type="InterPro" id="IPR005940">
    <property type="entry name" value="Anthranilate_Pribosyl_Tfrase"/>
</dbReference>
<dbReference type="InterPro" id="IPR000312">
    <property type="entry name" value="Glycosyl_Trfase_fam3"/>
</dbReference>
<dbReference type="InterPro" id="IPR017459">
    <property type="entry name" value="Glycosyl_Trfase_fam3_N_dom"/>
</dbReference>
<dbReference type="InterPro" id="IPR036320">
    <property type="entry name" value="Glycosyl_Trfase_fam3_N_dom_sf"/>
</dbReference>
<dbReference type="InterPro" id="IPR035902">
    <property type="entry name" value="Nuc_phospho_transferase"/>
</dbReference>
<dbReference type="NCBIfam" id="TIGR01245">
    <property type="entry name" value="trpD"/>
    <property type="match status" value="1"/>
</dbReference>
<dbReference type="PANTHER" id="PTHR43285">
    <property type="entry name" value="ANTHRANILATE PHOSPHORIBOSYLTRANSFERASE"/>
    <property type="match status" value="1"/>
</dbReference>
<dbReference type="PANTHER" id="PTHR43285:SF2">
    <property type="entry name" value="ANTHRANILATE PHOSPHORIBOSYLTRANSFERASE"/>
    <property type="match status" value="1"/>
</dbReference>
<dbReference type="Pfam" id="PF02885">
    <property type="entry name" value="Glycos_trans_3N"/>
    <property type="match status" value="1"/>
</dbReference>
<dbReference type="Pfam" id="PF00591">
    <property type="entry name" value="Glycos_transf_3"/>
    <property type="match status" value="1"/>
</dbReference>
<dbReference type="SUPFAM" id="SSF52418">
    <property type="entry name" value="Nucleoside phosphorylase/phosphoribosyltransferase catalytic domain"/>
    <property type="match status" value="1"/>
</dbReference>
<dbReference type="SUPFAM" id="SSF47648">
    <property type="entry name" value="Nucleoside phosphorylase/phosphoribosyltransferase N-terminal domain"/>
    <property type="match status" value="1"/>
</dbReference>
<proteinExistence type="inferred from homology"/>
<accession>Q3IKY4</accession>